<dbReference type="EC" id="3.6.4.13"/>
<dbReference type="EMBL" id="CR382126">
    <property type="protein sequence ID" value="CAG98887.1"/>
    <property type="molecule type" value="Genomic_DNA"/>
</dbReference>
<dbReference type="RefSeq" id="XP_456179.1">
    <property type="nucleotide sequence ID" value="XM_456179.1"/>
</dbReference>
<dbReference type="SMR" id="Q6CIR0"/>
<dbReference type="FunCoup" id="Q6CIR0">
    <property type="interactions" value="1156"/>
</dbReference>
<dbReference type="STRING" id="284590.Q6CIR0"/>
<dbReference type="PaxDb" id="284590-Q6CIR0"/>
<dbReference type="KEGG" id="kla:KLLA0_F24684g"/>
<dbReference type="eggNOG" id="KOG0337">
    <property type="taxonomic scope" value="Eukaryota"/>
</dbReference>
<dbReference type="HOGENOM" id="CLU_003041_5_1_1"/>
<dbReference type="InParanoid" id="Q6CIR0"/>
<dbReference type="OMA" id="EDQFGMM"/>
<dbReference type="Proteomes" id="UP000000598">
    <property type="component" value="Chromosome F"/>
</dbReference>
<dbReference type="GO" id="GO:0005829">
    <property type="term" value="C:cytosol"/>
    <property type="evidence" value="ECO:0007669"/>
    <property type="project" value="TreeGrafter"/>
</dbReference>
<dbReference type="GO" id="GO:0005730">
    <property type="term" value="C:nucleolus"/>
    <property type="evidence" value="ECO:0007669"/>
    <property type="project" value="UniProtKB-SubCell"/>
</dbReference>
<dbReference type="GO" id="GO:0005524">
    <property type="term" value="F:ATP binding"/>
    <property type="evidence" value="ECO:0007669"/>
    <property type="project" value="UniProtKB-KW"/>
</dbReference>
<dbReference type="GO" id="GO:0016887">
    <property type="term" value="F:ATP hydrolysis activity"/>
    <property type="evidence" value="ECO:0007669"/>
    <property type="project" value="RHEA"/>
</dbReference>
<dbReference type="GO" id="GO:0003723">
    <property type="term" value="F:RNA binding"/>
    <property type="evidence" value="ECO:0007669"/>
    <property type="project" value="UniProtKB-KW"/>
</dbReference>
<dbReference type="GO" id="GO:0003724">
    <property type="term" value="F:RNA helicase activity"/>
    <property type="evidence" value="ECO:0007669"/>
    <property type="project" value="UniProtKB-EC"/>
</dbReference>
<dbReference type="GO" id="GO:0006364">
    <property type="term" value="P:rRNA processing"/>
    <property type="evidence" value="ECO:0007669"/>
    <property type="project" value="UniProtKB-KW"/>
</dbReference>
<dbReference type="CDD" id="cd17959">
    <property type="entry name" value="DEADc_DDX54"/>
    <property type="match status" value="1"/>
</dbReference>
<dbReference type="CDD" id="cd18787">
    <property type="entry name" value="SF2_C_DEAD"/>
    <property type="match status" value="1"/>
</dbReference>
<dbReference type="FunFam" id="3.40.50.300:FF:000865">
    <property type="entry name" value="ATP-dependent RNA helicase DDX54"/>
    <property type="match status" value="1"/>
</dbReference>
<dbReference type="Gene3D" id="3.40.50.300">
    <property type="entry name" value="P-loop containing nucleotide triphosphate hydrolases"/>
    <property type="match status" value="2"/>
</dbReference>
<dbReference type="InterPro" id="IPR012541">
    <property type="entry name" value="DBP10_C"/>
</dbReference>
<dbReference type="InterPro" id="IPR033517">
    <property type="entry name" value="DDX54/DBP10_DEAD-box_helicase"/>
</dbReference>
<dbReference type="InterPro" id="IPR011545">
    <property type="entry name" value="DEAD/DEAH_box_helicase_dom"/>
</dbReference>
<dbReference type="InterPro" id="IPR050079">
    <property type="entry name" value="DEAD_box_RNA_helicase"/>
</dbReference>
<dbReference type="InterPro" id="IPR014001">
    <property type="entry name" value="Helicase_ATP-bd"/>
</dbReference>
<dbReference type="InterPro" id="IPR001650">
    <property type="entry name" value="Helicase_C-like"/>
</dbReference>
<dbReference type="InterPro" id="IPR027417">
    <property type="entry name" value="P-loop_NTPase"/>
</dbReference>
<dbReference type="InterPro" id="IPR000629">
    <property type="entry name" value="RNA-helicase_DEAD-box_CS"/>
</dbReference>
<dbReference type="InterPro" id="IPR014014">
    <property type="entry name" value="RNA_helicase_DEAD_Q_motif"/>
</dbReference>
<dbReference type="PANTHER" id="PTHR47959">
    <property type="entry name" value="ATP-DEPENDENT RNA HELICASE RHLE-RELATED"/>
    <property type="match status" value="1"/>
</dbReference>
<dbReference type="PANTHER" id="PTHR47959:SF8">
    <property type="entry name" value="RNA HELICASE"/>
    <property type="match status" value="1"/>
</dbReference>
<dbReference type="Pfam" id="PF08147">
    <property type="entry name" value="DBP10CT"/>
    <property type="match status" value="1"/>
</dbReference>
<dbReference type="Pfam" id="PF00270">
    <property type="entry name" value="DEAD"/>
    <property type="match status" value="1"/>
</dbReference>
<dbReference type="Pfam" id="PF00271">
    <property type="entry name" value="Helicase_C"/>
    <property type="match status" value="1"/>
</dbReference>
<dbReference type="SMART" id="SM01123">
    <property type="entry name" value="DBP10CT"/>
    <property type="match status" value="1"/>
</dbReference>
<dbReference type="SMART" id="SM00487">
    <property type="entry name" value="DEXDc"/>
    <property type="match status" value="1"/>
</dbReference>
<dbReference type="SMART" id="SM00490">
    <property type="entry name" value="HELICc"/>
    <property type="match status" value="1"/>
</dbReference>
<dbReference type="SUPFAM" id="SSF52540">
    <property type="entry name" value="P-loop containing nucleoside triphosphate hydrolases"/>
    <property type="match status" value="2"/>
</dbReference>
<dbReference type="PROSITE" id="PS00039">
    <property type="entry name" value="DEAD_ATP_HELICASE"/>
    <property type="match status" value="1"/>
</dbReference>
<dbReference type="PROSITE" id="PS51192">
    <property type="entry name" value="HELICASE_ATP_BIND_1"/>
    <property type="match status" value="1"/>
</dbReference>
<dbReference type="PROSITE" id="PS51194">
    <property type="entry name" value="HELICASE_CTER"/>
    <property type="match status" value="1"/>
</dbReference>
<dbReference type="PROSITE" id="PS51195">
    <property type="entry name" value="Q_MOTIF"/>
    <property type="match status" value="1"/>
</dbReference>
<proteinExistence type="inferred from homology"/>
<accession>Q6CIR0</accession>
<keyword id="KW-0067">ATP-binding</keyword>
<keyword id="KW-0347">Helicase</keyword>
<keyword id="KW-0378">Hydrolase</keyword>
<keyword id="KW-0547">Nucleotide-binding</keyword>
<keyword id="KW-0539">Nucleus</keyword>
<keyword id="KW-1185">Reference proteome</keyword>
<keyword id="KW-0690">Ribosome biogenesis</keyword>
<keyword id="KW-0694">RNA-binding</keyword>
<keyword id="KW-0698">rRNA processing</keyword>
<reference key="1">
    <citation type="journal article" date="2004" name="Nature">
        <title>Genome evolution in yeasts.</title>
        <authorList>
            <person name="Dujon B."/>
            <person name="Sherman D."/>
            <person name="Fischer G."/>
            <person name="Durrens P."/>
            <person name="Casaregola S."/>
            <person name="Lafontaine I."/>
            <person name="de Montigny J."/>
            <person name="Marck C."/>
            <person name="Neuveglise C."/>
            <person name="Talla E."/>
            <person name="Goffard N."/>
            <person name="Frangeul L."/>
            <person name="Aigle M."/>
            <person name="Anthouard V."/>
            <person name="Babour A."/>
            <person name="Barbe V."/>
            <person name="Barnay S."/>
            <person name="Blanchin S."/>
            <person name="Beckerich J.-M."/>
            <person name="Beyne E."/>
            <person name="Bleykasten C."/>
            <person name="Boisrame A."/>
            <person name="Boyer J."/>
            <person name="Cattolico L."/>
            <person name="Confanioleri F."/>
            <person name="de Daruvar A."/>
            <person name="Despons L."/>
            <person name="Fabre E."/>
            <person name="Fairhead C."/>
            <person name="Ferry-Dumazet H."/>
            <person name="Groppi A."/>
            <person name="Hantraye F."/>
            <person name="Hennequin C."/>
            <person name="Jauniaux N."/>
            <person name="Joyet P."/>
            <person name="Kachouri R."/>
            <person name="Kerrest A."/>
            <person name="Koszul R."/>
            <person name="Lemaire M."/>
            <person name="Lesur I."/>
            <person name="Ma L."/>
            <person name="Muller H."/>
            <person name="Nicaud J.-M."/>
            <person name="Nikolski M."/>
            <person name="Oztas S."/>
            <person name="Ozier-Kalogeropoulos O."/>
            <person name="Pellenz S."/>
            <person name="Potier S."/>
            <person name="Richard G.-F."/>
            <person name="Straub M.-L."/>
            <person name="Suleau A."/>
            <person name="Swennen D."/>
            <person name="Tekaia F."/>
            <person name="Wesolowski-Louvel M."/>
            <person name="Westhof E."/>
            <person name="Wirth B."/>
            <person name="Zeniou-Meyer M."/>
            <person name="Zivanovic Y."/>
            <person name="Bolotin-Fukuhara M."/>
            <person name="Thierry A."/>
            <person name="Bouchier C."/>
            <person name="Caudron B."/>
            <person name="Scarpelli C."/>
            <person name="Gaillardin C."/>
            <person name="Weissenbach J."/>
            <person name="Wincker P."/>
            <person name="Souciet J.-L."/>
        </authorList>
    </citation>
    <scope>NUCLEOTIDE SEQUENCE [LARGE SCALE GENOMIC DNA]</scope>
    <source>
        <strain>ATCC 8585 / CBS 2359 / DSM 70799 / NBRC 1267 / NRRL Y-1140 / WM37</strain>
    </source>
</reference>
<organism>
    <name type="scientific">Kluyveromyces lactis (strain ATCC 8585 / CBS 2359 / DSM 70799 / NBRC 1267 / NRRL Y-1140 / WM37)</name>
    <name type="common">Yeast</name>
    <name type="synonym">Candida sphaerica</name>
    <dbReference type="NCBI Taxonomy" id="284590"/>
    <lineage>
        <taxon>Eukaryota</taxon>
        <taxon>Fungi</taxon>
        <taxon>Dikarya</taxon>
        <taxon>Ascomycota</taxon>
        <taxon>Saccharomycotina</taxon>
        <taxon>Saccharomycetes</taxon>
        <taxon>Saccharomycetales</taxon>
        <taxon>Saccharomycetaceae</taxon>
        <taxon>Kluyveromyces</taxon>
    </lineage>
</organism>
<name>DBP10_KLULA</name>
<protein>
    <recommendedName>
        <fullName>ATP-dependent RNA helicase DBP10</fullName>
        <ecNumber>3.6.4.13</ecNumber>
    </recommendedName>
</protein>
<evidence type="ECO:0000250" key="1"/>
<evidence type="ECO:0000255" key="2">
    <source>
        <dbReference type="PROSITE-ProRule" id="PRU00541"/>
    </source>
</evidence>
<evidence type="ECO:0000255" key="3">
    <source>
        <dbReference type="PROSITE-ProRule" id="PRU00542"/>
    </source>
</evidence>
<evidence type="ECO:0000256" key="4">
    <source>
        <dbReference type="SAM" id="MobiDB-lite"/>
    </source>
</evidence>
<evidence type="ECO:0000305" key="5"/>
<comment type="function">
    <text evidence="1">ATP-binding RNA helicase involved in the biogenesis of 60S ribosomal subunits and is required for the normal formation of 25S and 5.8S rRNAs.</text>
</comment>
<comment type="catalytic activity">
    <reaction>
        <text>ATP + H2O = ADP + phosphate + H(+)</text>
        <dbReference type="Rhea" id="RHEA:13065"/>
        <dbReference type="ChEBI" id="CHEBI:15377"/>
        <dbReference type="ChEBI" id="CHEBI:15378"/>
        <dbReference type="ChEBI" id="CHEBI:30616"/>
        <dbReference type="ChEBI" id="CHEBI:43474"/>
        <dbReference type="ChEBI" id="CHEBI:456216"/>
        <dbReference type="EC" id="3.6.4.13"/>
    </reaction>
</comment>
<comment type="subcellular location">
    <subcellularLocation>
        <location evidence="1">Nucleus</location>
        <location evidence="1">Nucleolus</location>
    </subcellularLocation>
</comment>
<comment type="domain">
    <text>The Q motif is unique to and characteristic of the DEAD box family of RNA helicases and controls ATP binding and hydrolysis.</text>
</comment>
<comment type="similarity">
    <text evidence="5">Belongs to the DEAD box helicase family. DDX54/DBP10 subfamily.</text>
</comment>
<feature type="chain" id="PRO_0000232317" description="ATP-dependent RNA helicase DBP10">
    <location>
        <begin position="1"/>
        <end position="973"/>
    </location>
</feature>
<feature type="domain" description="Helicase ATP-binding" evidence="2">
    <location>
        <begin position="157"/>
        <end position="329"/>
    </location>
</feature>
<feature type="domain" description="Helicase C-terminal" evidence="3">
    <location>
        <begin position="408"/>
        <end position="552"/>
    </location>
</feature>
<feature type="region of interest" description="Disordered" evidence="4">
    <location>
        <begin position="1"/>
        <end position="80"/>
    </location>
</feature>
<feature type="region of interest" description="Disordered" evidence="4">
    <location>
        <begin position="376"/>
        <end position="413"/>
    </location>
</feature>
<feature type="region of interest" description="Disordered" evidence="4">
    <location>
        <begin position="878"/>
        <end position="913"/>
    </location>
</feature>
<feature type="region of interest" description="Disordered" evidence="4">
    <location>
        <begin position="954"/>
        <end position="973"/>
    </location>
</feature>
<feature type="short sequence motif" description="Q motif">
    <location>
        <begin position="126"/>
        <end position="154"/>
    </location>
</feature>
<feature type="short sequence motif" description="DEAD box">
    <location>
        <begin position="277"/>
        <end position="280"/>
    </location>
</feature>
<feature type="compositionally biased region" description="Basic and acidic residues" evidence="4">
    <location>
        <begin position="1"/>
        <end position="10"/>
    </location>
</feature>
<feature type="compositionally biased region" description="Acidic residues" evidence="4">
    <location>
        <begin position="33"/>
        <end position="45"/>
    </location>
</feature>
<feature type="compositionally biased region" description="Basic residues" evidence="4">
    <location>
        <begin position="69"/>
        <end position="79"/>
    </location>
</feature>
<feature type="compositionally biased region" description="Basic residues" evidence="4">
    <location>
        <begin position="397"/>
        <end position="409"/>
    </location>
</feature>
<feature type="compositionally biased region" description="Basic residues" evidence="4">
    <location>
        <begin position="959"/>
        <end position="973"/>
    </location>
</feature>
<feature type="binding site" evidence="2">
    <location>
        <begin position="170"/>
        <end position="177"/>
    </location>
    <ligand>
        <name>ATP</name>
        <dbReference type="ChEBI" id="CHEBI:30616"/>
    </ligand>
</feature>
<sequence>MVDSSKRALPAEDYSSEDEDAFDIAGDIALNADSEDSDISDDDNDNIGFQAEVQDVIEFSSDEEEKEKKPKKQNKKAKVKAGPIVDSKFPSLELSDDEKKATNESDDDLNDYFNTTADAAAKHKKGSFASFGLSKLVLINISKKGFRQPTPIQRKTIPLILQKRDIVGMARTGSGKTAAFVLPMIEKLKTHSAKIGVRAVILSPSRELAIQTHRVFKEFSKGSDLRSILLTGGDSLEDQFGMMMGNPDVVIATPGRFLHLKVEMNLDLKSVEYVVFDEADRLFEMGFQEQLNELLVAFPTNRQTLLFSATLPSSLVDFAKAGLSNPVLVRLDAETKISENLEMLFISIKKDEREANLLYLLQEAIKMPVATESQIKKLKQQNDADSDSDDSEDEKKKKAKKAKKSKRRLPNANEMPSEKATIVFVPTRHHVEYVTQLLKNCGYLVSYIYGALNQHARKQQLYNFRAGLTSILVVTDVAARGVDIPLLANVINYSLPGSSKIFIHRVGRTARAGNRGWAFSIVSENELPYLLDLELFLGKKILLTPMYESSCQILRKKAESEGNNNFTDPKVSYTTRMVLGACPRSEIDGMGDLYSNMIKSDFELNTVKGVALKAEKLYFRTRTPASAESMKRSKEILRSGWDEQNIYFGKNAEKEKLDFLAKLQHRNNKETVFEFARNPDDEMSVLMKRRRRQIAPIQRKAKERQELLEKERMIGLRHSIEDEILKGEDNEVGYSVPDEVLKEFEDADVLLEEQENIKKKQKKTFRDPTFYLSHFAPTSDIQDKQLQISSGFTNDASNAAFDLANDDKVQVHKQTATVKWDKKRKKYVNTQGLDNKKYIIGESGQKIPASFRSGKFQDWSKARKIAPLKVGARESTIPSNLLADPTSPSERTVGGKFKHKTQKAPKLPDKHRDDYAFQKKKVEAALERGVRVKGYNGPGMKQEIKSVDEIRKLREIKEKKRSKNARPTKRRKH</sequence>
<gene>
    <name type="primary">DBP10</name>
    <name type="ordered locus">KLLA0F24684g</name>
</gene>